<organism>
    <name type="scientific">Sendai virus (strain Fushimi)</name>
    <name type="common">SeV</name>
    <dbReference type="NCBI Taxonomy" id="11195"/>
    <lineage>
        <taxon>Viruses</taxon>
        <taxon>Riboviria</taxon>
        <taxon>Orthornavirae</taxon>
        <taxon>Negarnaviricota</taxon>
        <taxon>Haploviricotina</taxon>
        <taxon>Monjiviricetes</taxon>
        <taxon>Mononegavirales</taxon>
        <taxon>Paramyxoviridae</taxon>
        <taxon>Feraresvirinae</taxon>
        <taxon>Respirovirus</taxon>
        <taxon>Respirovirus muris</taxon>
    </lineage>
</organism>
<gene>
    <name type="primary">L</name>
</gene>
<comment type="function">
    <text evidence="2">RNA-directed RNA polymerase that catalyzes the transcription of viral mRNAs, their capping and polyadenylation. The template is composed of the viral RNA tightly encapsidated by the nucleoprotein (N). The viral polymerase binds to the genomic RNA at the 3' leader promoter, and transcribes subsequently all viral mRNAs with a decreasing efficiency. The first gene is the most transcribed, and the last the least transcribed. The viral phosphoprotein acts as a processivity factor. Capping is concomitant with initiation of mRNA transcription. Indeed, a GDP polyribonucleotidyl transferase (PRNTase) adds the cap structure when the nascent RNA chain length has reached few nucleotides. Ribose 2'-O methylation of viral mRNA cap precedes and facilitates subsequent guanine-N-7 methylation, both activities being carried by the viral polymerase. Polyadenylation of mRNAs occur by a stuttering mechanism at a slipery stop site present at the end viral genes. After finishing transcription of a mRNA, the polymerase can resume transcription of the downstream gene.</text>
</comment>
<comment type="function">
    <text evidence="2">RNA-directed RNA polymerase that catalyzes the replication of viral genomic RNA. The template is composed of the viral RNA tightly encapsidated by the nucleoprotein (N). The replicase mode is dependent on intracellular N protein concentration. In this mode, the polymerase replicates the whole viral genome without recognizing transcriptional signals, and the replicated genome is not caped or polyadenylated.</text>
</comment>
<comment type="catalytic activity">
    <reaction evidence="5">
        <text>RNA(n) + a ribonucleoside 5'-triphosphate = RNA(n+1) + diphosphate</text>
        <dbReference type="Rhea" id="RHEA:21248"/>
        <dbReference type="Rhea" id="RHEA-COMP:14527"/>
        <dbReference type="Rhea" id="RHEA-COMP:17342"/>
        <dbReference type="ChEBI" id="CHEBI:33019"/>
        <dbReference type="ChEBI" id="CHEBI:61557"/>
        <dbReference type="ChEBI" id="CHEBI:140395"/>
        <dbReference type="EC" id="2.7.7.48"/>
    </reaction>
</comment>
<comment type="catalytic activity">
    <reaction evidence="2">
        <text>a 5'-end (5'-triphosphoguanosine)-adenylyl-adenylyl-cytidylyl-adenosine in mRNA + 2 S-adenosyl-L-methionine = a 5'-end (N(7)-methyl 5'-triphosphoguanosine)-(2'-O-methyladenylyl)-adenylyl-cytidylyl-adenosine in mRNA + 2 S-adenosyl-L-homocysteine + H(+)</text>
        <dbReference type="Rhea" id="RHEA:65376"/>
        <dbReference type="Rhea" id="RHEA-COMP:16797"/>
        <dbReference type="Rhea" id="RHEA-COMP:16798"/>
        <dbReference type="ChEBI" id="CHEBI:15378"/>
        <dbReference type="ChEBI" id="CHEBI:57856"/>
        <dbReference type="ChEBI" id="CHEBI:59789"/>
        <dbReference type="ChEBI" id="CHEBI:156483"/>
        <dbReference type="ChEBI" id="CHEBI:156484"/>
        <dbReference type="EC" id="2.1.1.375"/>
    </reaction>
</comment>
<comment type="catalytic activity">
    <reaction evidence="2">
        <text>a 5'-end (5'-triphosphoguanosine)-adenylyl-adenylyl-cytidylyl-adenosine in mRNA + S-adenosyl-L-methionine = a 5'-end (5'-triphosphoguanosine)-(2'-O-methyladenylyl)-adenylyl-cytidylyl-adenosine in mRNA + S-adenosyl-L-homocysteine + H(+)</text>
        <dbReference type="Rhea" id="RHEA:65380"/>
        <dbReference type="Rhea" id="RHEA-COMP:16797"/>
        <dbReference type="Rhea" id="RHEA-COMP:16801"/>
        <dbReference type="ChEBI" id="CHEBI:15378"/>
        <dbReference type="ChEBI" id="CHEBI:57856"/>
        <dbReference type="ChEBI" id="CHEBI:59789"/>
        <dbReference type="ChEBI" id="CHEBI:156482"/>
        <dbReference type="ChEBI" id="CHEBI:156484"/>
    </reaction>
</comment>
<comment type="catalytic activity">
    <reaction evidence="3">
        <text>a 5'-end triphospho-adenylyl-adenylyl-cytidylyl-adenosine in mRNA + GDP + H(+) = a 5'-end (5'-triphosphoguanosine)-adenylyl-adenylyl-cytidylyl-adenosine in mRNA + diphosphate</text>
        <dbReference type="Rhea" id="RHEA:65436"/>
        <dbReference type="Rhea" id="RHEA-COMP:16797"/>
        <dbReference type="Rhea" id="RHEA-COMP:16799"/>
        <dbReference type="ChEBI" id="CHEBI:15378"/>
        <dbReference type="ChEBI" id="CHEBI:33019"/>
        <dbReference type="ChEBI" id="CHEBI:58189"/>
        <dbReference type="ChEBI" id="CHEBI:156484"/>
        <dbReference type="ChEBI" id="CHEBI:156503"/>
        <dbReference type="EC" id="2.7.7.88"/>
    </reaction>
</comment>
<comment type="catalytic activity">
    <reaction evidence="2">
        <text>a 5'-end (5'-triphosphoguanosine)-(2'-O-methyladenylyl)-adenylyl-cytidylyl-adenosine in mRNA + S-adenosyl-L-methionine = a 5'-end (N(7)-methyl 5'-triphosphoguanosine)-(2'-O-methyladenylyl)-adenylyl-cytidylyl-adenosine in mRNA + S-adenosyl-L-homocysteine</text>
        <dbReference type="Rhea" id="RHEA:65440"/>
        <dbReference type="Rhea" id="RHEA-COMP:16798"/>
        <dbReference type="Rhea" id="RHEA-COMP:16801"/>
        <dbReference type="ChEBI" id="CHEBI:57856"/>
        <dbReference type="ChEBI" id="CHEBI:59789"/>
        <dbReference type="ChEBI" id="CHEBI:156482"/>
        <dbReference type="ChEBI" id="CHEBI:156483"/>
    </reaction>
</comment>
<comment type="catalytic activity">
    <reaction evidence="3">
        <text>GTP + H2O = GDP + phosphate + H(+)</text>
        <dbReference type="Rhea" id="RHEA:19669"/>
        <dbReference type="ChEBI" id="CHEBI:15377"/>
        <dbReference type="ChEBI" id="CHEBI:15378"/>
        <dbReference type="ChEBI" id="CHEBI:37565"/>
        <dbReference type="ChEBI" id="CHEBI:43474"/>
        <dbReference type="ChEBI" id="CHEBI:58189"/>
    </reaction>
</comment>
<comment type="subunit">
    <text evidence="1">Homooligomer. Interacts with the P and C proteins. The L protein complexes with P protein to form the functional polymerase. C protein binding to L has an inhibitory effect (By similarity).</text>
</comment>
<comment type="subcellular location">
    <subcellularLocation>
        <location evidence="8">Virion</location>
    </subcellularLocation>
    <subcellularLocation>
        <location evidence="1">Host cytoplasm</location>
    </subcellularLocation>
</comment>
<comment type="domain">
    <text evidence="1">The N-terminal part (about 1-400) seems to be involved in binding to the P protein.</text>
</comment>
<comment type="miscellaneous">
    <text evidence="1">Least abundant structural protein (approximately 50 copies per virion). Unstable in the absence of P protein (By similarity).</text>
</comment>
<comment type="similarity">
    <text evidence="8">Belongs to the paramyxovirus L protein family.</text>
</comment>
<evidence type="ECO:0000250" key="1"/>
<evidence type="ECO:0000250" key="2">
    <source>
        <dbReference type="UniProtKB" id="P03523"/>
    </source>
</evidence>
<evidence type="ECO:0000250" key="3">
    <source>
        <dbReference type="UniProtKB" id="P28887"/>
    </source>
</evidence>
<evidence type="ECO:0000255" key="4"/>
<evidence type="ECO:0000255" key="5">
    <source>
        <dbReference type="PROSITE-ProRule" id="PRU00539"/>
    </source>
</evidence>
<evidence type="ECO:0000255" key="6">
    <source>
        <dbReference type="PROSITE-ProRule" id="PRU00923"/>
    </source>
</evidence>
<evidence type="ECO:0000256" key="7">
    <source>
        <dbReference type="SAM" id="MobiDB-lite"/>
    </source>
</evidence>
<evidence type="ECO:0000305" key="8"/>
<feature type="chain" id="PRO_0000142738" description="RNA-directed RNA polymerase L">
    <location>
        <begin position="1"/>
        <end position="2228"/>
    </location>
</feature>
<feature type="domain" description="RdRp catalytic" evidence="5">
    <location>
        <begin position="656"/>
        <end position="840"/>
    </location>
</feature>
<feature type="domain" description="Mononegavirus-type SAM-dependent 2'-O-MTase" evidence="6">
    <location>
        <begin position="1771"/>
        <end position="1978"/>
    </location>
</feature>
<feature type="region of interest" description="Oligomerization domain" evidence="1">
    <location>
        <begin position="1"/>
        <end position="174"/>
    </location>
</feature>
<feature type="region of interest" description="Disordered" evidence="7">
    <location>
        <begin position="610"/>
        <end position="633"/>
    </location>
</feature>
<feature type="region of interest" description="Involved in mRNA cap methylation" evidence="1">
    <location>
        <begin position="1756"/>
        <end position="2228"/>
    </location>
</feature>
<feature type="compositionally biased region" description="Basic and acidic residues" evidence="7">
    <location>
        <begin position="616"/>
        <end position="625"/>
    </location>
</feature>
<feature type="binding site" evidence="4">
    <location>
        <begin position="1801"/>
        <end position="1810"/>
    </location>
    <ligand>
        <name>ATP</name>
        <dbReference type="ChEBI" id="CHEBI:30616"/>
    </ligand>
</feature>
<organismHost>
    <name type="scientific">Cavia cutleri</name>
    <name type="common">Guinea pig</name>
    <dbReference type="NCBI Taxonomy" id="10144"/>
</organismHost>
<organismHost>
    <name type="scientific">Cricetidae sp.</name>
    <name type="common">Hamster</name>
    <dbReference type="NCBI Taxonomy" id="36483"/>
</organismHost>
<organismHost>
    <name type="scientific">Mus musculus</name>
    <name type="common">Mouse</name>
    <dbReference type="NCBI Taxonomy" id="10090"/>
</organismHost>
<organismHost>
    <name type="scientific">Rattus norvegicus</name>
    <name type="common">Rat</name>
    <dbReference type="NCBI Taxonomy" id="10116"/>
</organismHost>
<keyword id="KW-0067">ATP-binding</keyword>
<keyword id="KW-1035">Host cytoplasm</keyword>
<keyword id="KW-0378">Hydrolase</keyword>
<keyword id="KW-0489">Methyltransferase</keyword>
<keyword id="KW-0506">mRNA capping</keyword>
<keyword id="KW-0507">mRNA processing</keyword>
<keyword id="KW-0511">Multifunctional enzyme</keyword>
<keyword id="KW-0547">Nucleotide-binding</keyword>
<keyword id="KW-0548">Nucleotidyltransferase</keyword>
<keyword id="KW-0696">RNA-directed RNA polymerase</keyword>
<keyword id="KW-0949">S-adenosyl-L-methionine</keyword>
<keyword id="KW-0808">Transferase</keyword>
<keyword id="KW-0693">Viral RNA replication</keyword>
<keyword id="KW-0946">Virion</keyword>
<reference key="1">
    <citation type="journal article" date="1992" name="J. Virol. Methods">
        <title>Rapid sequencing of the Sendai virus 6.8 kb large (L) gene through primer walking with an automated DNA sequencer.</title>
        <authorList>
            <person name="Giesecke H."/>
            <person name="Neubert N."/>
            <person name="Obermaier B."/>
            <person name="Domdey H."/>
        </authorList>
    </citation>
    <scope>NUCLEOTIDE SEQUENCE [GENOMIC RNA]</scope>
</reference>
<dbReference type="EC" id="2.7.7.48" evidence="3"/>
<dbReference type="EC" id="3.6.1.-" evidence="2"/>
<dbReference type="EC" id="2.7.7.88" evidence="2"/>
<dbReference type="EC" id="2.1.1.375" evidence="2"/>
<dbReference type="EMBL" id="X58886">
    <property type="protein sequence ID" value="CAA41690.1"/>
    <property type="molecule type" value="Genomic_RNA"/>
</dbReference>
<dbReference type="SMR" id="Q06996"/>
<dbReference type="Proteomes" id="UP000006825">
    <property type="component" value="Genome"/>
</dbReference>
<dbReference type="GO" id="GO:0030430">
    <property type="term" value="C:host cell cytoplasm"/>
    <property type="evidence" value="ECO:0007669"/>
    <property type="project" value="UniProtKB-SubCell"/>
</dbReference>
<dbReference type="GO" id="GO:0044423">
    <property type="term" value="C:virion component"/>
    <property type="evidence" value="ECO:0007669"/>
    <property type="project" value="UniProtKB-KW"/>
</dbReference>
<dbReference type="GO" id="GO:0005524">
    <property type="term" value="F:ATP binding"/>
    <property type="evidence" value="ECO:0007669"/>
    <property type="project" value="UniProtKB-KW"/>
</dbReference>
<dbReference type="GO" id="GO:0003924">
    <property type="term" value="F:GTPase activity"/>
    <property type="evidence" value="ECO:0007669"/>
    <property type="project" value="RHEA"/>
</dbReference>
<dbReference type="GO" id="GO:0004482">
    <property type="term" value="F:mRNA 5'-cap (guanine-N7-)-methyltransferase activity"/>
    <property type="evidence" value="ECO:0007669"/>
    <property type="project" value="InterPro"/>
</dbReference>
<dbReference type="GO" id="GO:0003968">
    <property type="term" value="F:RNA-directed RNA polymerase activity"/>
    <property type="evidence" value="ECO:0007669"/>
    <property type="project" value="UniProtKB-KW"/>
</dbReference>
<dbReference type="InterPro" id="IPR039736">
    <property type="entry name" value="L_poly_C"/>
</dbReference>
<dbReference type="InterPro" id="IPR026890">
    <property type="entry name" value="Mononeg_mRNAcap"/>
</dbReference>
<dbReference type="InterPro" id="IPR014023">
    <property type="entry name" value="Mononeg_RNA_pol_cat"/>
</dbReference>
<dbReference type="InterPro" id="IPR025786">
    <property type="entry name" value="Mononega_L_MeTrfase"/>
</dbReference>
<dbReference type="InterPro" id="IPR016269">
    <property type="entry name" value="RNA-dir_pol_paramyxovirus"/>
</dbReference>
<dbReference type="NCBIfam" id="TIGR04198">
    <property type="entry name" value="paramyx_RNAcap"/>
    <property type="match status" value="1"/>
</dbReference>
<dbReference type="Pfam" id="PF14318">
    <property type="entry name" value="Mononeg_mRNAcap"/>
    <property type="match status" value="1"/>
</dbReference>
<dbReference type="Pfam" id="PF00946">
    <property type="entry name" value="Mononeg_RNA_pol"/>
    <property type="match status" value="1"/>
</dbReference>
<dbReference type="PIRSF" id="PIRSF000830">
    <property type="entry name" value="RNA_pol_ParamyxoV"/>
    <property type="match status" value="1"/>
</dbReference>
<dbReference type="PROSITE" id="PS50526">
    <property type="entry name" value="RDRP_SSRNA_NEG_NONSEG"/>
    <property type="match status" value="1"/>
</dbReference>
<dbReference type="PROSITE" id="PS51590">
    <property type="entry name" value="SAM_MT_MNV_L"/>
    <property type="match status" value="1"/>
</dbReference>
<name>L_SENDF</name>
<protein>
    <recommendedName>
        <fullName>RNA-directed RNA polymerase L</fullName>
        <shortName>Protein L</shortName>
    </recommendedName>
    <alternativeName>
        <fullName>Large structural protein</fullName>
    </alternativeName>
    <alternativeName>
        <fullName>Replicase</fullName>
    </alternativeName>
    <alternativeName>
        <fullName>Transcriptase</fullName>
    </alternativeName>
    <domain>
        <recommendedName>
            <fullName>RNA-directed RNA polymerase</fullName>
            <ecNumber evidence="3">2.7.7.48</ecNumber>
        </recommendedName>
    </domain>
    <domain>
        <recommendedName>
            <fullName evidence="2">GTP phosphohydrolase</fullName>
            <ecNumber evidence="2">3.6.1.-</ecNumber>
        </recommendedName>
    </domain>
    <domain>
        <recommendedName>
            <fullName evidence="8">GDP polyribonucleotidyltransferase</fullName>
            <ecNumber evidence="2">2.7.7.88</ecNumber>
        </recommendedName>
        <alternativeName>
            <fullName evidence="8">PRNTase</fullName>
        </alternativeName>
    </domain>
    <domain>
        <recommendedName>
            <fullName evidence="8">mRNA cap methyltransferase</fullName>
            <ecNumber evidence="2">2.1.1.375</ecNumber>
        </recommendedName>
        <alternativeName>
            <fullName evidence="2">mRNA (guanine-N(7)-)-methyltransferase</fullName>
            <shortName evidence="2">G-N7-MTase</shortName>
        </alternativeName>
        <alternativeName>
            <fullName evidence="2">mRNA (nucleoside-2'-O-)-methyltransferase</fullName>
            <shortName evidence="2">N1-2'-O-MTase</shortName>
        </alternativeName>
    </domain>
</protein>
<sequence>MDGQESSQNPSDILYPECHLNSPIVRGKIAQLHVLLDVNQPYRLKDDSIINITKHKIRNGGLSPRQIKIRSLGKALQRTIKDLDRYTFDPYPTYSQELLRLDIPEICDKIRSVFAVSDRLTRELSSGFQDLWLNIFKQLGNIEGREGYDPLQDISTIPEITDKYSRNRWYRPFLTWFSIKYDMRWMQKTRPGGPLDTSNSHNLLECKSYTLVTYGDLVMILNKLTLTGYILTPELVLMYCDVVEGRWNMSAAGHLDKRSIGITSKGEELWELVDSLFSSLGEEIYNVIALLEPLSLALIQLNDPVIPLRGAFMRHVLTELQTVLTSRDVYTDAEADTIVESLLAIFHGTSIDEKAEIFSFFRTFGHPSLEAVTAADKVRAHMYAQKAIKLKTLYECHAVFCTIIINGYRERHGGQWPPCDFPDHVCLELRNAQGSNTAISYECAVDNYTSFIGFKFRKFIEPQLDEDLTIYMKDKALSPRKEAWDSVYPDSNLYYKAPESEETRRLIEVFINDENFNPEEIINYVESGDWLKDEKFNISYSLKEKEIKQEGRLFAKMTYKMRAVQVLAETLLAKGIGELFSENGMVKGEIDLLKRLTTLSVSGVPRTDSVYNNSKSSEKRNEGMKKKNSGGYWDEKKRSRHEFKATDSSTDGYETLSCFLTTDLKKYCLNWRFESTALFGQRCNEIFGFKTFFNWMHPVLERCTIYVGDPYCPVADRMHRQLQDHADSGIFIHNPRGGIEGYCQKLWTLISISAIHLAAVRVGVRVSAMVQGDNQAIAVTSRVPVAQTYKQKKNHVYEETTKYFGALRHVMFDVGHELKLNETIISSKMFVYSKRIYYDGKILPQCLKALTRCVFWSETLVDENRSACSNISTSIAKAIENGYSPILGYCIALYKTCQQVCISLGMTINPTISPTVRDQYFKGKNWLRCAVLIPANVGGFNYMSTSRCFVRNIGDPAVAALADLKRFIRADLLDKQVLYRVMNQEPGDSSFLDWASDPYSCNLPHSQSITTIIKNITARSVLQESPNPLLSGLFTETSGEEDLNLASFLMDRKVILPRVAHEILGNSLTGVREAIAGMLDTTKSLVRASVRKGGLSYGILRRLVNYDLLQYETLTRTLRKPVKDNIEYEYMCSVELAVGLRQKMWIHLTYGRPIHGLETPDPLELLRGTFIEGSEVCKLCRSEGADPIYTWFYLPDNIDLDTLTNGSPAIRIPYFGSATDERSEAQLGYVRNLSKPAKAAIRIAMVYTWAYGTDEISWMEAALIAQTRANLSLENLKLLTPVSTSTNLSHRLKDTATQMKFSSATLVRASRFITISNDNMALKEAGESKDTNLVYQQIMLTGLSLFEFNMRYKKGSLGKPLILHLHLNNGCCIMESPQEANIPPRSTLDLEITQENNKLIYDPDPLKDVDLELFSKVRDVVHTVDMTYWSDDEVIRATSICTAMTIADTMSQLDRDNLKEMIALVNDDDVNSLITEFMVIDVPLFCSTFGGILVNQFAYSLYGLNIRGREEIWGHVVRILKDTSHAVLKVLSNALSHPKIFKRFWNAGVVEPVYGPNLSNQDKILLALSVCEYSVDLFMHDWQGGVPLEIFICDNDPDVADMRRSSFLARHLAYLCSLAEISRDGPRLESMNSLERLESLKSYLELTFLDDPVLRYSQLTGLVIKVFPSTLTYIRKSSIKVLRTRGIGVPEVLEDWDPEADNALLDGIAAEIQQNIPLGHQTRAPFWGLRVSKSQVLRLRGYKEITRGEIGRSGVGLTLPFDGRYLSHQLRLFGINSTSCLKALELTYLLSPLVDKDKDRLYLGEGAGAMLSCYDATLGPCINYYNSGVYSCDVNGQRELNIYPAEVALVGKKLNNVTSLGQRVKVLFNGNPGSTWIGNDECEALIWNELQNSSIGLVHCDMEGGDHKDDQVVLHEHYSVIRIAYLVGDRDVVLISKIAPRLGTDWTRQLSLYLRYWDEVNLIVLKTSNPASTEMYLLSRHPKSDIIEDSKTVLASLLPLSKEDSIKIEKWILIEKAKAHEWVTRELREGSSSSGMLRPYHQALQTFGFEPNLYKLSRDFLSTMNIADTHNCMIAFNRVLQDTIFEWARITESDKRLKLTGKYDLYPVRDSGKLKTISRRLVLSWISLSMSTRLVTGSFPDQKFEARLQLGIVSLSSREIRNLRVITKTLLDRFEDIIHSITYRFLTKEIKILMKILGAVKMFGASQNEYTTVIDDGSLGDIEPYDSS</sequence>
<accession>Q06996</accession>
<proteinExistence type="inferred from homology"/>